<accession>P30619</accession>
<accession>D6VSE4</accession>
<proteinExistence type="evidence at protein level"/>
<comment type="function">
    <text>Involved in the final stage of protein secretion.</text>
</comment>
<comment type="subunit">
    <text>Interacts with MSO1.</text>
</comment>
<comment type="interaction">
    <interactant intactId="EBI-16833">
        <id>P30619</id>
    </interactant>
    <interactant intactId="EBI-2086543">
        <id>P53604</id>
        <label>MSO1</label>
    </interactant>
    <organismsDiffer>false</organismsDiffer>
    <experiments>4</experiments>
</comment>
<comment type="miscellaneous">
    <text evidence="2">Present with 639 molecules/cell in log phase SD medium.</text>
</comment>
<comment type="similarity">
    <text evidence="3">Belongs to the STXBP/unc-18/SEC1 family.</text>
</comment>
<reference key="1">
    <citation type="journal article" date="1991" name="Yeast">
        <title>Cloning and sequencing of the yeast Saccharomyces cerevisiae SEC1 gene localized on chromosome IV.</title>
        <authorList>
            <person name="Aalto M.K."/>
            <person name="Ruohonen L."/>
            <person name="Hosono K."/>
            <person name="Keraenen S."/>
        </authorList>
    </citation>
    <scope>NUCLEOTIDE SEQUENCE [GENOMIC DNA]</scope>
    <source>
        <strain>ATCC 208353 / W303-1A</strain>
    </source>
</reference>
<reference key="2">
    <citation type="journal article" date="1992" name="Yeast">
        <authorList>
            <person name="Aalto M.K."/>
            <person name="Ruohonen L."/>
            <person name="Hosono K."/>
            <person name="Keraenen S."/>
        </authorList>
    </citation>
    <scope>ERRATUM OF PUBMED:1767592</scope>
</reference>
<reference key="3">
    <citation type="journal article" date="1997" name="Nature">
        <title>The nucleotide sequence of Saccharomyces cerevisiae chromosome IV.</title>
        <authorList>
            <person name="Jacq C."/>
            <person name="Alt-Moerbe J."/>
            <person name="Andre B."/>
            <person name="Arnold W."/>
            <person name="Bahr A."/>
            <person name="Ballesta J.P.G."/>
            <person name="Bargues M."/>
            <person name="Baron L."/>
            <person name="Becker A."/>
            <person name="Biteau N."/>
            <person name="Bloecker H."/>
            <person name="Blugeon C."/>
            <person name="Boskovic J."/>
            <person name="Brandt P."/>
            <person name="Brueckner M."/>
            <person name="Buitrago M.J."/>
            <person name="Coster F."/>
            <person name="Delaveau T."/>
            <person name="del Rey F."/>
            <person name="Dujon B."/>
            <person name="Eide L.G."/>
            <person name="Garcia-Cantalejo J.M."/>
            <person name="Goffeau A."/>
            <person name="Gomez-Peris A."/>
            <person name="Granotier C."/>
            <person name="Hanemann V."/>
            <person name="Hankeln T."/>
            <person name="Hoheisel J.D."/>
            <person name="Jaeger W."/>
            <person name="Jimenez A."/>
            <person name="Jonniaux J.-L."/>
            <person name="Kraemer C."/>
            <person name="Kuester H."/>
            <person name="Laamanen P."/>
            <person name="Legros Y."/>
            <person name="Louis E.J."/>
            <person name="Moeller-Rieker S."/>
            <person name="Monnet A."/>
            <person name="Moro M."/>
            <person name="Mueller-Auer S."/>
            <person name="Nussbaumer B."/>
            <person name="Paricio N."/>
            <person name="Paulin L."/>
            <person name="Perea J."/>
            <person name="Perez-Alonso M."/>
            <person name="Perez-Ortin J.E."/>
            <person name="Pohl T.M."/>
            <person name="Prydz H."/>
            <person name="Purnelle B."/>
            <person name="Rasmussen S.W."/>
            <person name="Remacha M.A."/>
            <person name="Revuelta J.L."/>
            <person name="Rieger M."/>
            <person name="Salom D."/>
            <person name="Saluz H.P."/>
            <person name="Saiz J.E."/>
            <person name="Saren A.-M."/>
            <person name="Schaefer M."/>
            <person name="Scharfe M."/>
            <person name="Schmidt E.R."/>
            <person name="Schneider C."/>
            <person name="Scholler P."/>
            <person name="Schwarz S."/>
            <person name="Soler-Mira A."/>
            <person name="Urrestarazu L.A."/>
            <person name="Verhasselt P."/>
            <person name="Vissers S."/>
            <person name="Voet M."/>
            <person name="Volckaert G."/>
            <person name="Wagner G."/>
            <person name="Wambutt R."/>
            <person name="Wedler E."/>
            <person name="Wedler H."/>
            <person name="Woelfl S."/>
            <person name="Harris D.E."/>
            <person name="Bowman S."/>
            <person name="Brown D."/>
            <person name="Churcher C.M."/>
            <person name="Connor R."/>
            <person name="Dedman K."/>
            <person name="Gentles S."/>
            <person name="Hamlin N."/>
            <person name="Hunt S."/>
            <person name="Jones L."/>
            <person name="McDonald S."/>
            <person name="Murphy L.D."/>
            <person name="Niblett D."/>
            <person name="Odell C."/>
            <person name="Oliver K."/>
            <person name="Rajandream M.A."/>
            <person name="Richards C."/>
            <person name="Shore L."/>
            <person name="Walsh S.V."/>
            <person name="Barrell B.G."/>
            <person name="Dietrich F.S."/>
            <person name="Mulligan J.T."/>
            <person name="Allen E."/>
            <person name="Araujo R."/>
            <person name="Aviles E."/>
            <person name="Berno A."/>
            <person name="Carpenter J."/>
            <person name="Chen E."/>
            <person name="Cherry J.M."/>
            <person name="Chung E."/>
            <person name="Duncan M."/>
            <person name="Hunicke-Smith S."/>
            <person name="Hyman R.W."/>
            <person name="Komp C."/>
            <person name="Lashkari D."/>
            <person name="Lew H."/>
            <person name="Lin D."/>
            <person name="Mosedale D."/>
            <person name="Nakahara K."/>
            <person name="Namath A."/>
            <person name="Oefner P."/>
            <person name="Oh C."/>
            <person name="Petel F.X."/>
            <person name="Roberts D."/>
            <person name="Schramm S."/>
            <person name="Schroeder M."/>
            <person name="Shogren T."/>
            <person name="Shroff N."/>
            <person name="Winant A."/>
            <person name="Yelton M.A."/>
            <person name="Botstein D."/>
            <person name="Davis R.W."/>
            <person name="Johnston M."/>
            <person name="Andrews S."/>
            <person name="Brinkman R."/>
            <person name="Cooper J."/>
            <person name="Ding H."/>
            <person name="Du Z."/>
            <person name="Favello A."/>
            <person name="Fulton L."/>
            <person name="Gattung S."/>
            <person name="Greco T."/>
            <person name="Hallsworth K."/>
            <person name="Hawkins J."/>
            <person name="Hillier L.W."/>
            <person name="Jier M."/>
            <person name="Johnson D."/>
            <person name="Johnston L."/>
            <person name="Kirsten J."/>
            <person name="Kucaba T."/>
            <person name="Langston Y."/>
            <person name="Latreille P."/>
            <person name="Le T."/>
            <person name="Mardis E."/>
            <person name="Menezes S."/>
            <person name="Miller N."/>
            <person name="Nhan M."/>
            <person name="Pauley A."/>
            <person name="Peluso D."/>
            <person name="Rifkin L."/>
            <person name="Riles L."/>
            <person name="Taich A."/>
            <person name="Trevaskis E."/>
            <person name="Vignati D."/>
            <person name="Wilcox L."/>
            <person name="Wohldman P."/>
            <person name="Vaudin M."/>
            <person name="Wilson R."/>
            <person name="Waterston R."/>
            <person name="Albermann K."/>
            <person name="Hani J."/>
            <person name="Heumann K."/>
            <person name="Kleine K."/>
            <person name="Mewes H.-W."/>
            <person name="Zollner A."/>
            <person name="Zaccaria P."/>
        </authorList>
    </citation>
    <scope>NUCLEOTIDE SEQUENCE [LARGE SCALE GENOMIC DNA]</scope>
    <source>
        <strain>ATCC 204508 / S288c</strain>
    </source>
</reference>
<reference key="4">
    <citation type="journal article" date="2014" name="G3 (Bethesda)">
        <title>The reference genome sequence of Saccharomyces cerevisiae: Then and now.</title>
        <authorList>
            <person name="Engel S.R."/>
            <person name="Dietrich F.S."/>
            <person name="Fisk D.G."/>
            <person name="Binkley G."/>
            <person name="Balakrishnan R."/>
            <person name="Costanzo M.C."/>
            <person name="Dwight S.S."/>
            <person name="Hitz B.C."/>
            <person name="Karra K."/>
            <person name="Nash R.S."/>
            <person name="Weng S."/>
            <person name="Wong E.D."/>
            <person name="Lloyd P."/>
            <person name="Skrzypek M.S."/>
            <person name="Miyasato S.R."/>
            <person name="Simison M."/>
            <person name="Cherry J.M."/>
        </authorList>
    </citation>
    <scope>GENOME REANNOTATION</scope>
    <source>
        <strain>ATCC 204508 / S288c</strain>
    </source>
</reference>
<reference key="5">
    <citation type="journal article" date="2003" name="Nature">
        <title>Global analysis of protein expression in yeast.</title>
        <authorList>
            <person name="Ghaemmaghami S."/>
            <person name="Huh W.-K."/>
            <person name="Bower K."/>
            <person name="Howson R.W."/>
            <person name="Belle A."/>
            <person name="Dephoure N."/>
            <person name="O'Shea E.K."/>
            <person name="Weissman J.S."/>
        </authorList>
    </citation>
    <scope>LEVEL OF PROTEIN EXPRESSION [LARGE SCALE ANALYSIS]</scope>
</reference>
<organism>
    <name type="scientific">Saccharomyces cerevisiae (strain ATCC 204508 / S288c)</name>
    <name type="common">Baker's yeast</name>
    <dbReference type="NCBI Taxonomy" id="559292"/>
    <lineage>
        <taxon>Eukaryota</taxon>
        <taxon>Fungi</taxon>
        <taxon>Dikarya</taxon>
        <taxon>Ascomycota</taxon>
        <taxon>Saccharomycotina</taxon>
        <taxon>Saccharomycetes</taxon>
        <taxon>Saccharomycetales</taxon>
        <taxon>Saccharomycetaceae</taxon>
        <taxon>Saccharomyces</taxon>
    </lineage>
</organism>
<sequence>MSDLIELQRNYLIGVLNQIETKNNLKFLIIDKTVETILSYLFLTPQELLNNVTSVDLIDSPTRKGQSSIEAIYILEPTKYNINCIDADFMVRPPKYRRCHIRFLPGLTNPIFQFFQSKRYIAQNLESFKPIELGFFVKESQFFETLQMEHSLQVFFNNNCKALIPTNVRKIVGSLVSLCVITGEYPIVRYSVSNPVEEEDARNGNAVVNANSLTRSIANAFQIAIDTYARNNPDFPPQNTERPRSILIITDRTLDPFAPILHDFSYQAMAYDLVANVDTQKDIYHYSAENEAGEQEEKVSKLVDLYDPDWIDLKHQHIMDANEYIQGRIKELIAKNPLLVDRSNVKNTTDLLSVVAHLKDFDEERRRLILHKTLVDECLGENAERKLADISAIEQNLSGFGMDFSGEKIKHIIDDLLPALAMKEPTILDKLRYIIAYALFRGGIIELDFIKLLNFIGVTHEHENFQQYLKIFRNYDLIDFKLIKDKPKDKPFQKEWFHDTLVNDPNIYHTSRFVPAVGNILSKVIANPLLLSEQYFPYLKDKPIELLNEEEFQAGLANTSANSSSSLRNPRHKAAWTTKSSNIKKNIPRQRFFYYVIGGISIPEIKAAYDQSNLKNRDIFIGSDEILTPTKFLDEVERLQNPREFFKFKEDQRQQVNPPDFLLREMKPVAQPVSHVHLKSQDNSPKSGTSSPKAAGSLKSEPPEKEKKRSKFSRFLKRKSHHDK</sequence>
<feature type="chain" id="PRO_0000206297" description="Protein transport protein SEC1">
    <location>
        <begin position="1"/>
        <end position="724"/>
    </location>
</feature>
<feature type="region of interest" description="Disordered" evidence="1">
    <location>
        <begin position="675"/>
        <end position="724"/>
    </location>
</feature>
<feature type="compositionally biased region" description="Polar residues" evidence="1">
    <location>
        <begin position="681"/>
        <end position="692"/>
    </location>
</feature>
<feature type="compositionally biased region" description="Basic residues" evidence="1">
    <location>
        <begin position="708"/>
        <end position="724"/>
    </location>
</feature>
<gene>
    <name type="primary">SEC1</name>
    <name type="ordered locus">YDR164C</name>
    <name type="ORF">YD8358.18C</name>
</gene>
<name>SEC1_YEAST</name>
<keyword id="KW-0653">Protein transport</keyword>
<keyword id="KW-1185">Reference proteome</keyword>
<keyword id="KW-0813">Transport</keyword>
<evidence type="ECO:0000256" key="1">
    <source>
        <dbReference type="SAM" id="MobiDB-lite"/>
    </source>
</evidence>
<evidence type="ECO:0000269" key="2">
    <source>
    </source>
</evidence>
<evidence type="ECO:0000305" key="3"/>
<dbReference type="EMBL" id="X62451">
    <property type="protein sequence ID" value="CAA44308.1"/>
    <property type="molecule type" value="Genomic_DNA"/>
</dbReference>
<dbReference type="EMBL" id="Z50046">
    <property type="protein sequence ID" value="CAA90384.1"/>
    <property type="molecule type" value="Genomic_DNA"/>
</dbReference>
<dbReference type="EMBL" id="BK006938">
    <property type="protein sequence ID" value="DAA12004.1"/>
    <property type="molecule type" value="Genomic_DNA"/>
</dbReference>
<dbReference type="PIR" id="S17479">
    <property type="entry name" value="S17479"/>
</dbReference>
<dbReference type="RefSeq" id="NP_010448.1">
    <property type="nucleotide sequence ID" value="NM_001180471.1"/>
</dbReference>
<dbReference type="SMR" id="P30619"/>
<dbReference type="BioGRID" id="32215">
    <property type="interactions" value="342"/>
</dbReference>
<dbReference type="DIP" id="DIP-2498N"/>
<dbReference type="FunCoup" id="P30619">
    <property type="interactions" value="1013"/>
</dbReference>
<dbReference type="IntAct" id="P30619">
    <property type="interactions" value="23"/>
</dbReference>
<dbReference type="MINT" id="P30619"/>
<dbReference type="STRING" id="4932.YDR164C"/>
<dbReference type="iPTMnet" id="P30619"/>
<dbReference type="PaxDb" id="4932-YDR164C"/>
<dbReference type="PeptideAtlas" id="P30619"/>
<dbReference type="TopDownProteomics" id="P30619"/>
<dbReference type="EnsemblFungi" id="YDR164C_mRNA">
    <property type="protein sequence ID" value="YDR164C"/>
    <property type="gene ID" value="YDR164C"/>
</dbReference>
<dbReference type="GeneID" id="851742"/>
<dbReference type="KEGG" id="sce:YDR164C"/>
<dbReference type="AGR" id="SGD:S000002571"/>
<dbReference type="SGD" id="S000002571">
    <property type="gene designation" value="SEC1"/>
</dbReference>
<dbReference type="VEuPathDB" id="FungiDB:YDR164C"/>
<dbReference type="eggNOG" id="KOG1300">
    <property type="taxonomic scope" value="Eukaryota"/>
</dbReference>
<dbReference type="GeneTree" id="ENSGT00940000174642"/>
<dbReference type="HOGENOM" id="CLU_009210_1_0_1"/>
<dbReference type="InParanoid" id="P30619"/>
<dbReference type="OMA" id="PFTRPHT"/>
<dbReference type="OrthoDB" id="2228at2759"/>
<dbReference type="BioCyc" id="YEAST:G3O-29754-MONOMER"/>
<dbReference type="Reactome" id="R-SCE-114516">
    <property type="pathway name" value="Disinhibition of SNARE formation"/>
</dbReference>
<dbReference type="Reactome" id="R-SCE-114608">
    <property type="pathway name" value="Platelet degranulation"/>
</dbReference>
<dbReference type="BioGRID-ORCS" id="851742">
    <property type="hits" value="5 hits in 10 CRISPR screens"/>
</dbReference>
<dbReference type="PRO" id="PR:P30619"/>
<dbReference type="Proteomes" id="UP000002311">
    <property type="component" value="Chromosome IV"/>
</dbReference>
<dbReference type="RNAct" id="P30619">
    <property type="molecule type" value="protein"/>
</dbReference>
<dbReference type="GO" id="GO:0071944">
    <property type="term" value="C:cell periphery"/>
    <property type="evidence" value="ECO:0007005"/>
    <property type="project" value="SGD"/>
</dbReference>
<dbReference type="GO" id="GO:0005935">
    <property type="term" value="C:cellular bud neck"/>
    <property type="evidence" value="ECO:0000314"/>
    <property type="project" value="SGD"/>
</dbReference>
<dbReference type="GO" id="GO:0005934">
    <property type="term" value="C:cellular bud tip"/>
    <property type="evidence" value="ECO:0000314"/>
    <property type="project" value="SGD"/>
</dbReference>
<dbReference type="GO" id="GO:0005886">
    <property type="term" value="C:plasma membrane"/>
    <property type="evidence" value="ECO:0000314"/>
    <property type="project" value="SGD"/>
</dbReference>
<dbReference type="GO" id="GO:0000149">
    <property type="term" value="F:SNARE binding"/>
    <property type="evidence" value="ECO:0000314"/>
    <property type="project" value="SGD"/>
</dbReference>
<dbReference type="GO" id="GO:0019905">
    <property type="term" value="F:syntaxin binding"/>
    <property type="evidence" value="ECO:0000318"/>
    <property type="project" value="GO_Central"/>
</dbReference>
<dbReference type="GO" id="GO:0006887">
    <property type="term" value="P:exocytosis"/>
    <property type="evidence" value="ECO:0000315"/>
    <property type="project" value="SGD"/>
</dbReference>
<dbReference type="GO" id="GO:0006886">
    <property type="term" value="P:intracellular protein transport"/>
    <property type="evidence" value="ECO:0000318"/>
    <property type="project" value="GO_Central"/>
</dbReference>
<dbReference type="GO" id="GO:0031340">
    <property type="term" value="P:positive regulation of vesicle fusion"/>
    <property type="evidence" value="ECO:0000314"/>
    <property type="project" value="SGD"/>
</dbReference>
<dbReference type="GO" id="GO:0006904">
    <property type="term" value="P:vesicle docking involved in exocytosis"/>
    <property type="evidence" value="ECO:0000353"/>
    <property type="project" value="SGD"/>
</dbReference>
<dbReference type="GO" id="GO:0016192">
    <property type="term" value="P:vesicle-mediated transport"/>
    <property type="evidence" value="ECO:0000318"/>
    <property type="project" value="GO_Central"/>
</dbReference>
<dbReference type="FunFam" id="1.25.40.60:FF:000012">
    <property type="entry name" value="SNARE docking complex subunit"/>
    <property type="match status" value="1"/>
</dbReference>
<dbReference type="FunFam" id="3.40.50.2060:FF:000013">
    <property type="entry name" value="SNARE docking complex subunit"/>
    <property type="match status" value="1"/>
</dbReference>
<dbReference type="FunFam" id="3.90.830.10:FF:000011">
    <property type="entry name" value="SNARE docking complex subunit"/>
    <property type="match status" value="1"/>
</dbReference>
<dbReference type="Gene3D" id="1.25.40.60">
    <property type="match status" value="1"/>
</dbReference>
<dbReference type="Gene3D" id="3.40.50.1910">
    <property type="match status" value="1"/>
</dbReference>
<dbReference type="Gene3D" id="3.40.50.2060">
    <property type="match status" value="1"/>
</dbReference>
<dbReference type="Gene3D" id="3.90.830.10">
    <property type="entry name" value="Syntaxin Binding Protein 1, Chain A, domain 2"/>
    <property type="match status" value="1"/>
</dbReference>
<dbReference type="InterPro" id="IPR043154">
    <property type="entry name" value="Sec-1-like_dom1"/>
</dbReference>
<dbReference type="InterPro" id="IPR043127">
    <property type="entry name" value="Sec-1-like_dom3a"/>
</dbReference>
<dbReference type="InterPro" id="IPR001619">
    <property type="entry name" value="Sec1-like"/>
</dbReference>
<dbReference type="InterPro" id="IPR027482">
    <property type="entry name" value="Sec1-like_dom2"/>
</dbReference>
<dbReference type="InterPro" id="IPR036045">
    <property type="entry name" value="Sec1-like_sf"/>
</dbReference>
<dbReference type="PANTHER" id="PTHR11679">
    <property type="entry name" value="VESICLE PROTEIN SORTING-ASSOCIATED"/>
    <property type="match status" value="1"/>
</dbReference>
<dbReference type="Pfam" id="PF00995">
    <property type="entry name" value="Sec1"/>
    <property type="match status" value="1"/>
</dbReference>
<dbReference type="PIRSF" id="PIRSF005715">
    <property type="entry name" value="VPS45_Sec1"/>
    <property type="match status" value="1"/>
</dbReference>
<dbReference type="SUPFAM" id="SSF56815">
    <property type="entry name" value="Sec1/munc18-like (SM) proteins"/>
    <property type="match status" value="1"/>
</dbReference>
<protein>
    <recommendedName>
        <fullName>Protein transport protein SEC1</fullName>
    </recommendedName>
</protein>